<keyword id="KW-0002">3D-structure</keyword>
<keyword id="KW-1185">Reference proteome</keyword>
<organism>
    <name type="scientific">Mycoplasma pneumoniae (strain ATCC 29342 / M129 / Subtype 1)</name>
    <name type="common">Mycoplasmoides pneumoniae</name>
    <dbReference type="NCBI Taxonomy" id="272634"/>
    <lineage>
        <taxon>Bacteria</taxon>
        <taxon>Bacillati</taxon>
        <taxon>Mycoplasmatota</taxon>
        <taxon>Mycoplasmoidales</taxon>
        <taxon>Mycoplasmoidaceae</taxon>
        <taxon>Mycoplasmoides</taxon>
    </lineage>
</organism>
<gene>
    <name type="ordered locus">MPN_010</name>
    <name type="ORF">D12_orf131</name>
    <name type="ORF">MP144</name>
</gene>
<comment type="similarity">
    <text evidence="1">Belongs to the UPF0134 family.</text>
</comment>
<dbReference type="EMBL" id="U00089">
    <property type="protein sequence ID" value="AAB95792.1"/>
    <property type="molecule type" value="Genomic_DNA"/>
</dbReference>
<dbReference type="PIR" id="S73470">
    <property type="entry name" value="S73470"/>
</dbReference>
<dbReference type="RefSeq" id="NP_109698.1">
    <property type="nucleotide sequence ID" value="NC_000912.1"/>
</dbReference>
<dbReference type="RefSeq" id="WP_010874367.1">
    <property type="nucleotide sequence ID" value="NZ_OU342337.1"/>
</dbReference>
<dbReference type="PDB" id="2BA2">
    <property type="method" value="X-ray"/>
    <property type="resolution" value="1.80 A"/>
    <property type="chains" value="A/B/C=46-130"/>
</dbReference>
<dbReference type="PDBsum" id="2BA2"/>
<dbReference type="SMR" id="P75103"/>
<dbReference type="STRING" id="272634.MPN_010"/>
<dbReference type="EnsemblBacteria" id="AAB95792">
    <property type="protein sequence ID" value="AAB95792"/>
    <property type="gene ID" value="MPN_010"/>
</dbReference>
<dbReference type="KEGG" id="mpn:MPN_010"/>
<dbReference type="PATRIC" id="fig|272634.6.peg.10"/>
<dbReference type="HOGENOM" id="CLU_089620_0_0_14"/>
<dbReference type="BioCyc" id="MPNE272634:G1GJ3-13-MONOMER"/>
<dbReference type="EvolutionaryTrace" id="P75103"/>
<dbReference type="Proteomes" id="UP000000808">
    <property type="component" value="Chromosome"/>
</dbReference>
<dbReference type="Gene3D" id="6.10.250.40">
    <property type="match status" value="1"/>
</dbReference>
<dbReference type="InterPro" id="IPR002862">
    <property type="entry name" value="DUF16"/>
</dbReference>
<dbReference type="Pfam" id="PF01519">
    <property type="entry name" value="DUF16"/>
    <property type="match status" value="1"/>
</dbReference>
<dbReference type="SUPFAM" id="SSF144266">
    <property type="entry name" value="MPN010-like"/>
    <property type="match status" value="1"/>
</dbReference>
<sequence length="131" mass="15232">MAYSPSLNDIKSILNKYTSKDYELKCENRYDGKLELWLKGVFEEIVKTPGTRYVTHKQLDEKLKNFVTKTEFKEFQTVVMESFAVQNQNIDAQGEQIKELQVEQKAQGKTLQLILEALQGINKRLDNLESK</sequence>
<name>Y010_MYCPN</name>
<accession>P75103</accession>
<reference key="1">
    <citation type="journal article" date="1996" name="Nucleic Acids Res.">
        <title>Complete sequence analysis of the genome of the bacterium Mycoplasma pneumoniae.</title>
        <authorList>
            <person name="Himmelreich R."/>
            <person name="Hilbert H."/>
            <person name="Plagens H."/>
            <person name="Pirkl E."/>
            <person name="Li B.-C."/>
            <person name="Herrmann R."/>
        </authorList>
    </citation>
    <scope>NUCLEOTIDE SEQUENCE [LARGE SCALE GENOMIC DNA]</scope>
    <source>
        <strain>ATCC 29342 / M129 / Subtype 1</strain>
    </source>
</reference>
<protein>
    <recommendedName>
        <fullName>UPF0134 protein MPN_010</fullName>
    </recommendedName>
</protein>
<feature type="chain" id="PRO_0000221590" description="UPF0134 protein MPN_010">
    <location>
        <begin position="1"/>
        <end position="131"/>
    </location>
</feature>
<feature type="helix" evidence="2">
    <location>
        <begin position="56"/>
        <end position="63"/>
    </location>
</feature>
<feature type="helix" evidence="2">
    <location>
        <begin position="69"/>
        <end position="128"/>
    </location>
</feature>
<proteinExistence type="evidence at protein level"/>
<evidence type="ECO:0000305" key="1"/>
<evidence type="ECO:0007829" key="2">
    <source>
        <dbReference type="PDB" id="2BA2"/>
    </source>
</evidence>